<dbReference type="EC" id="2.4.2.22" evidence="1"/>
<dbReference type="EMBL" id="AE016877">
    <property type="protein sequence ID" value="AAP08548.1"/>
    <property type="molecule type" value="Genomic_DNA"/>
</dbReference>
<dbReference type="RefSeq" id="NP_831347.1">
    <property type="nucleotide sequence ID" value="NC_004722.1"/>
</dbReference>
<dbReference type="RefSeq" id="WP_000866483.1">
    <property type="nucleotide sequence ID" value="NZ_CP138336.1"/>
</dbReference>
<dbReference type="SMR" id="Q81FL2"/>
<dbReference type="STRING" id="226900.BC_1569"/>
<dbReference type="KEGG" id="bce:BC1569"/>
<dbReference type="PATRIC" id="fig|226900.8.peg.1547"/>
<dbReference type="HOGENOM" id="CLU_099015_0_0_9"/>
<dbReference type="OrthoDB" id="9790678at2"/>
<dbReference type="UniPathway" id="UPA00602">
    <property type="reaction ID" value="UER00658"/>
</dbReference>
<dbReference type="PRO" id="PR:Q81FL2"/>
<dbReference type="Proteomes" id="UP000001417">
    <property type="component" value="Chromosome"/>
</dbReference>
<dbReference type="GO" id="GO:0005737">
    <property type="term" value="C:cytoplasm"/>
    <property type="evidence" value="ECO:0007669"/>
    <property type="project" value="UniProtKB-SubCell"/>
</dbReference>
<dbReference type="GO" id="GO:0000310">
    <property type="term" value="F:xanthine phosphoribosyltransferase activity"/>
    <property type="evidence" value="ECO:0007669"/>
    <property type="project" value="UniProtKB-UniRule"/>
</dbReference>
<dbReference type="GO" id="GO:0006166">
    <property type="term" value="P:purine ribonucleoside salvage"/>
    <property type="evidence" value="ECO:0007669"/>
    <property type="project" value="UniProtKB-KW"/>
</dbReference>
<dbReference type="GO" id="GO:0046110">
    <property type="term" value="P:xanthine metabolic process"/>
    <property type="evidence" value="ECO:0007669"/>
    <property type="project" value="InterPro"/>
</dbReference>
<dbReference type="GO" id="GO:0032265">
    <property type="term" value="P:XMP salvage"/>
    <property type="evidence" value="ECO:0007669"/>
    <property type="project" value="UniProtKB-UniRule"/>
</dbReference>
<dbReference type="CDD" id="cd06223">
    <property type="entry name" value="PRTases_typeI"/>
    <property type="match status" value="1"/>
</dbReference>
<dbReference type="Gene3D" id="3.40.50.2020">
    <property type="match status" value="1"/>
</dbReference>
<dbReference type="HAMAP" id="MF_01184">
    <property type="entry name" value="XPRTase"/>
    <property type="match status" value="1"/>
</dbReference>
<dbReference type="InterPro" id="IPR000836">
    <property type="entry name" value="PRibTrfase_dom"/>
</dbReference>
<dbReference type="InterPro" id="IPR029057">
    <property type="entry name" value="PRTase-like"/>
</dbReference>
<dbReference type="InterPro" id="IPR050118">
    <property type="entry name" value="Pur/Pyrimidine_PRTase"/>
</dbReference>
<dbReference type="InterPro" id="IPR010079">
    <property type="entry name" value="Xanthine_PRibTrfase"/>
</dbReference>
<dbReference type="NCBIfam" id="NF006671">
    <property type="entry name" value="PRK09219.1"/>
    <property type="match status" value="1"/>
</dbReference>
<dbReference type="NCBIfam" id="TIGR01744">
    <property type="entry name" value="XPRTase"/>
    <property type="match status" value="1"/>
</dbReference>
<dbReference type="PANTHER" id="PTHR43864">
    <property type="entry name" value="HYPOXANTHINE/GUANINE PHOSPHORIBOSYLTRANSFERASE"/>
    <property type="match status" value="1"/>
</dbReference>
<dbReference type="PANTHER" id="PTHR43864:SF1">
    <property type="entry name" value="XANTHINE PHOSPHORIBOSYLTRANSFERASE"/>
    <property type="match status" value="1"/>
</dbReference>
<dbReference type="Pfam" id="PF00156">
    <property type="entry name" value="Pribosyltran"/>
    <property type="match status" value="1"/>
</dbReference>
<dbReference type="SUPFAM" id="SSF53271">
    <property type="entry name" value="PRTase-like"/>
    <property type="match status" value="1"/>
</dbReference>
<keyword id="KW-0963">Cytoplasm</keyword>
<keyword id="KW-0328">Glycosyltransferase</keyword>
<keyword id="KW-0660">Purine salvage</keyword>
<keyword id="KW-1185">Reference proteome</keyword>
<keyword id="KW-0808">Transferase</keyword>
<organism>
    <name type="scientific">Bacillus cereus (strain ATCC 14579 / DSM 31 / CCUG 7414 / JCM 2152 / NBRC 15305 / NCIMB 9373 / NCTC 2599 / NRRL B-3711)</name>
    <dbReference type="NCBI Taxonomy" id="226900"/>
    <lineage>
        <taxon>Bacteria</taxon>
        <taxon>Bacillati</taxon>
        <taxon>Bacillota</taxon>
        <taxon>Bacilli</taxon>
        <taxon>Bacillales</taxon>
        <taxon>Bacillaceae</taxon>
        <taxon>Bacillus</taxon>
        <taxon>Bacillus cereus group</taxon>
    </lineage>
</organism>
<accession>Q81FL2</accession>
<evidence type="ECO:0000255" key="1">
    <source>
        <dbReference type="HAMAP-Rule" id="MF_01184"/>
    </source>
</evidence>
<proteinExistence type="inferred from homology"/>
<name>XPT_BACCR</name>
<protein>
    <recommendedName>
        <fullName evidence="1">Xanthine phosphoribosyltransferase</fullName>
        <shortName evidence="1">XPRTase</shortName>
        <ecNumber evidence="1">2.4.2.22</ecNumber>
    </recommendedName>
</protein>
<feature type="chain" id="PRO_0000339661" description="Xanthine phosphoribosyltransferase">
    <location>
        <begin position="1"/>
        <end position="197"/>
    </location>
</feature>
<feature type="binding site" evidence="1">
    <location>
        <position position="20"/>
    </location>
    <ligand>
        <name>xanthine</name>
        <dbReference type="ChEBI" id="CHEBI:17712"/>
    </ligand>
</feature>
<feature type="binding site" evidence="1">
    <location>
        <position position="27"/>
    </location>
    <ligand>
        <name>xanthine</name>
        <dbReference type="ChEBI" id="CHEBI:17712"/>
    </ligand>
</feature>
<feature type="binding site" evidence="1">
    <location>
        <begin position="128"/>
        <end position="132"/>
    </location>
    <ligand>
        <name>5-phospho-alpha-D-ribose 1-diphosphate</name>
        <dbReference type="ChEBI" id="CHEBI:58017"/>
    </ligand>
</feature>
<feature type="binding site" evidence="1">
    <location>
        <position position="156"/>
    </location>
    <ligand>
        <name>xanthine</name>
        <dbReference type="ChEBI" id="CHEBI:17712"/>
    </ligand>
</feature>
<comment type="function">
    <text evidence="1">Converts the preformed base xanthine, a product of nucleic acid breakdown, to xanthosine 5'-monophosphate (XMP), so it can be reused for RNA or DNA synthesis.</text>
</comment>
<comment type="catalytic activity">
    <reaction evidence="1">
        <text>XMP + diphosphate = xanthine + 5-phospho-alpha-D-ribose 1-diphosphate</text>
        <dbReference type="Rhea" id="RHEA:10800"/>
        <dbReference type="ChEBI" id="CHEBI:17712"/>
        <dbReference type="ChEBI" id="CHEBI:33019"/>
        <dbReference type="ChEBI" id="CHEBI:57464"/>
        <dbReference type="ChEBI" id="CHEBI:58017"/>
        <dbReference type="EC" id="2.4.2.22"/>
    </reaction>
</comment>
<comment type="pathway">
    <text evidence="1">Purine metabolism; XMP biosynthesis via salvage pathway; XMP from xanthine: step 1/1.</text>
</comment>
<comment type="subunit">
    <text evidence="1">Homodimer.</text>
</comment>
<comment type="subcellular location">
    <subcellularLocation>
        <location evidence="1">Cytoplasm</location>
    </subcellularLocation>
</comment>
<comment type="similarity">
    <text evidence="1">Belongs to the purine/pyrimidine phosphoribosyltransferase family. Xpt subfamily.</text>
</comment>
<sequence length="197" mass="21618">MKVLQEKILNEGKVLSGDVLKVDAFLNHQIDPVLMQEIGKEFAKRFKEENITKIVTIESSGIAPAVMAALELGVKVIFARKRKSLTLQDNMYVANVYSFTKQETNEISLSRNHIDENDRVLIIDDFLANGQAALGLMSLVEQAGASIAGIGIVIEKAFQDGGKKLREQGVRVESLAEIASLDNGTVTFVQQETAEVK</sequence>
<reference key="1">
    <citation type="journal article" date="2003" name="Nature">
        <title>Genome sequence of Bacillus cereus and comparative analysis with Bacillus anthracis.</title>
        <authorList>
            <person name="Ivanova N."/>
            <person name="Sorokin A."/>
            <person name="Anderson I."/>
            <person name="Galleron N."/>
            <person name="Candelon B."/>
            <person name="Kapatral V."/>
            <person name="Bhattacharyya A."/>
            <person name="Reznik G."/>
            <person name="Mikhailova N."/>
            <person name="Lapidus A."/>
            <person name="Chu L."/>
            <person name="Mazur M."/>
            <person name="Goltsman E."/>
            <person name="Larsen N."/>
            <person name="D'Souza M."/>
            <person name="Walunas T."/>
            <person name="Grechkin Y."/>
            <person name="Pusch G."/>
            <person name="Haselkorn R."/>
            <person name="Fonstein M."/>
            <person name="Ehrlich S.D."/>
            <person name="Overbeek R."/>
            <person name="Kyrpides N.C."/>
        </authorList>
    </citation>
    <scope>NUCLEOTIDE SEQUENCE [LARGE SCALE GENOMIC DNA]</scope>
    <source>
        <strain>ATCC 14579 / DSM 31 / CCUG 7414 / JCM 2152 / NBRC 15305 / NCIMB 9373 / NCTC 2599 / NRRL B-3711</strain>
    </source>
</reference>
<gene>
    <name evidence="1" type="primary">xpt</name>
    <name type="ordered locus">BC_1569</name>
</gene>